<sequence length="241" mass="26401">MSNFAVSLPEVIAVLPAAGIGSRMLVDCPKQYLTVGGKTIIEHAIFSLLHHPRIQRVIVVIHPQDTQFSRLSVAQDPRISTVYGGDQRANSVMAGLQLAGQAEWVLVHDAARPCLHLDDLSRLLSITECSQVGGILAAPVRDTMKRAEPGIQAIAHTVDRQDLWHALTPQLFPLELLKLCLSRALREGVAVTDEASALEHCGYHPILVTGRSDNIKVTRPEDLALAEFYLTQRQSLNNDSL</sequence>
<protein>
    <recommendedName>
        <fullName evidence="1">2-C-methyl-D-erythritol 4-phosphate cytidylyltransferase</fullName>
        <ecNumber evidence="1">2.7.7.60</ecNumber>
    </recommendedName>
    <alternativeName>
        <fullName evidence="1">4-diphosphocytidyl-2C-methyl-D-erythritol synthase</fullName>
    </alternativeName>
    <alternativeName>
        <fullName evidence="1">MEP cytidylyltransferase</fullName>
        <shortName evidence="1">MCT</shortName>
    </alternativeName>
</protein>
<feature type="chain" id="PRO_0000075653" description="2-C-methyl-D-erythritol 4-phosphate cytidylyltransferase">
    <location>
        <begin position="1"/>
        <end position="241"/>
    </location>
</feature>
<feature type="site" description="Transition state stabilizer" evidence="1">
    <location>
        <position position="23"/>
    </location>
</feature>
<feature type="site" description="Transition state stabilizer" evidence="1">
    <location>
        <position position="30"/>
    </location>
</feature>
<feature type="site" description="Positions MEP for the nucleophilic attack" evidence="1">
    <location>
        <position position="160"/>
    </location>
</feature>
<feature type="site" description="Positions MEP for the nucleophilic attack" evidence="1">
    <location>
        <position position="216"/>
    </location>
</feature>
<organism>
    <name type="scientific">Yersinia pestis</name>
    <dbReference type="NCBI Taxonomy" id="632"/>
    <lineage>
        <taxon>Bacteria</taxon>
        <taxon>Pseudomonadati</taxon>
        <taxon>Pseudomonadota</taxon>
        <taxon>Gammaproteobacteria</taxon>
        <taxon>Enterobacterales</taxon>
        <taxon>Yersiniaceae</taxon>
        <taxon>Yersinia</taxon>
    </lineage>
</organism>
<comment type="function">
    <text evidence="1">Catalyzes the formation of 4-diphosphocytidyl-2-C-methyl-D-erythritol from CTP and 2-C-methyl-D-erythritol 4-phosphate (MEP).</text>
</comment>
<comment type="catalytic activity">
    <reaction evidence="1">
        <text>2-C-methyl-D-erythritol 4-phosphate + CTP + H(+) = 4-CDP-2-C-methyl-D-erythritol + diphosphate</text>
        <dbReference type="Rhea" id="RHEA:13429"/>
        <dbReference type="ChEBI" id="CHEBI:15378"/>
        <dbReference type="ChEBI" id="CHEBI:33019"/>
        <dbReference type="ChEBI" id="CHEBI:37563"/>
        <dbReference type="ChEBI" id="CHEBI:57823"/>
        <dbReference type="ChEBI" id="CHEBI:58262"/>
        <dbReference type="EC" id="2.7.7.60"/>
    </reaction>
</comment>
<comment type="pathway">
    <text evidence="1">Isoprenoid biosynthesis; isopentenyl diphosphate biosynthesis via DXP pathway; isopentenyl diphosphate from 1-deoxy-D-xylulose 5-phosphate: step 2/6.</text>
</comment>
<comment type="subunit">
    <text evidence="1">Homodimer.</text>
</comment>
<comment type="similarity">
    <text evidence="1">Belongs to the IspD/TarI cytidylyltransferase family. IspD subfamily.</text>
</comment>
<reference key="1">
    <citation type="journal article" date="2001" name="Nature">
        <title>Genome sequence of Yersinia pestis, the causative agent of plague.</title>
        <authorList>
            <person name="Parkhill J."/>
            <person name="Wren B.W."/>
            <person name="Thomson N.R."/>
            <person name="Titball R.W."/>
            <person name="Holden M.T.G."/>
            <person name="Prentice M.B."/>
            <person name="Sebaihia M."/>
            <person name="James K.D."/>
            <person name="Churcher C.M."/>
            <person name="Mungall K.L."/>
            <person name="Baker S."/>
            <person name="Basham D."/>
            <person name="Bentley S.D."/>
            <person name="Brooks K."/>
            <person name="Cerdeno-Tarraga A.-M."/>
            <person name="Chillingworth T."/>
            <person name="Cronin A."/>
            <person name="Davies R.M."/>
            <person name="Davis P."/>
            <person name="Dougan G."/>
            <person name="Feltwell T."/>
            <person name="Hamlin N."/>
            <person name="Holroyd S."/>
            <person name="Jagels K."/>
            <person name="Karlyshev A.V."/>
            <person name="Leather S."/>
            <person name="Moule S."/>
            <person name="Oyston P.C.F."/>
            <person name="Quail M.A."/>
            <person name="Rutherford K.M."/>
            <person name="Simmonds M."/>
            <person name="Skelton J."/>
            <person name="Stevens K."/>
            <person name="Whitehead S."/>
            <person name="Barrell B.G."/>
        </authorList>
    </citation>
    <scope>NUCLEOTIDE SEQUENCE [LARGE SCALE GENOMIC DNA]</scope>
    <source>
        <strain>CO-92 / Biovar Orientalis</strain>
    </source>
</reference>
<reference key="2">
    <citation type="journal article" date="2002" name="J. Bacteriol.">
        <title>Genome sequence of Yersinia pestis KIM.</title>
        <authorList>
            <person name="Deng W."/>
            <person name="Burland V."/>
            <person name="Plunkett G. III"/>
            <person name="Boutin A."/>
            <person name="Mayhew G.F."/>
            <person name="Liss P."/>
            <person name="Perna N.T."/>
            <person name="Rose D.J."/>
            <person name="Mau B."/>
            <person name="Zhou S."/>
            <person name="Schwartz D.C."/>
            <person name="Fetherston J.D."/>
            <person name="Lindler L.E."/>
            <person name="Brubaker R.R."/>
            <person name="Plano G.V."/>
            <person name="Straley S.C."/>
            <person name="McDonough K.A."/>
            <person name="Nilles M.L."/>
            <person name="Matson J.S."/>
            <person name="Blattner F.R."/>
            <person name="Perry R.D."/>
        </authorList>
    </citation>
    <scope>NUCLEOTIDE SEQUENCE [LARGE SCALE GENOMIC DNA]</scope>
    <source>
        <strain>KIM10+ / Biovar Mediaevalis</strain>
    </source>
</reference>
<reference key="3">
    <citation type="journal article" date="2004" name="DNA Res.">
        <title>Complete genome sequence of Yersinia pestis strain 91001, an isolate avirulent to humans.</title>
        <authorList>
            <person name="Song Y."/>
            <person name="Tong Z."/>
            <person name="Wang J."/>
            <person name="Wang L."/>
            <person name="Guo Z."/>
            <person name="Han Y."/>
            <person name="Zhang J."/>
            <person name="Pei D."/>
            <person name="Zhou D."/>
            <person name="Qin H."/>
            <person name="Pang X."/>
            <person name="Han Y."/>
            <person name="Zhai J."/>
            <person name="Li M."/>
            <person name="Cui B."/>
            <person name="Qi Z."/>
            <person name="Jin L."/>
            <person name="Dai R."/>
            <person name="Chen F."/>
            <person name="Li S."/>
            <person name="Ye C."/>
            <person name="Du Z."/>
            <person name="Lin W."/>
            <person name="Wang J."/>
            <person name="Yu J."/>
            <person name="Yang H."/>
            <person name="Wang J."/>
            <person name="Huang P."/>
            <person name="Yang R."/>
        </authorList>
    </citation>
    <scope>NUCLEOTIDE SEQUENCE [LARGE SCALE GENOMIC DNA]</scope>
    <source>
        <strain>91001 / Biovar Mediaevalis</strain>
    </source>
</reference>
<evidence type="ECO:0000255" key="1">
    <source>
        <dbReference type="HAMAP-Rule" id="MF_00108"/>
    </source>
</evidence>
<dbReference type="EC" id="2.7.7.60" evidence="1"/>
<dbReference type="EMBL" id="AL590842">
    <property type="protein sequence ID" value="CAL21950.1"/>
    <property type="molecule type" value="Genomic_DNA"/>
</dbReference>
<dbReference type="EMBL" id="AE009952">
    <property type="protein sequence ID" value="AAM84413.1"/>
    <property type="molecule type" value="Genomic_DNA"/>
</dbReference>
<dbReference type="EMBL" id="AE017042">
    <property type="protein sequence ID" value="AAS60599.1"/>
    <property type="molecule type" value="Genomic_DNA"/>
</dbReference>
<dbReference type="PIR" id="AC0408">
    <property type="entry name" value="AC0408"/>
</dbReference>
<dbReference type="RefSeq" id="WP_002209391.1">
    <property type="nucleotide sequence ID" value="NZ_WUCM01000008.1"/>
</dbReference>
<dbReference type="RefSeq" id="YP_002348254.1">
    <property type="nucleotide sequence ID" value="NC_003143.1"/>
</dbReference>
<dbReference type="SMR" id="Q8ZBP6"/>
<dbReference type="STRING" id="214092.YPO3361"/>
<dbReference type="PaxDb" id="214092-YPO3361"/>
<dbReference type="DNASU" id="1145775"/>
<dbReference type="EnsemblBacteria" id="AAS60599">
    <property type="protein sequence ID" value="AAS60599"/>
    <property type="gene ID" value="YP_0326"/>
</dbReference>
<dbReference type="GeneID" id="57975348"/>
<dbReference type="KEGG" id="ype:YPO3361"/>
<dbReference type="KEGG" id="ypk:y0828"/>
<dbReference type="KEGG" id="ypm:YP_0326"/>
<dbReference type="PATRIC" id="fig|214092.21.peg.3838"/>
<dbReference type="eggNOG" id="COG1211">
    <property type="taxonomic scope" value="Bacteria"/>
</dbReference>
<dbReference type="HOGENOM" id="CLU_061281_3_1_6"/>
<dbReference type="OMA" id="TPMLIHA"/>
<dbReference type="OrthoDB" id="9806837at2"/>
<dbReference type="UniPathway" id="UPA00056">
    <property type="reaction ID" value="UER00093"/>
</dbReference>
<dbReference type="Proteomes" id="UP000000815">
    <property type="component" value="Chromosome"/>
</dbReference>
<dbReference type="Proteomes" id="UP000001019">
    <property type="component" value="Chromosome"/>
</dbReference>
<dbReference type="Proteomes" id="UP000002490">
    <property type="component" value="Chromosome"/>
</dbReference>
<dbReference type="GO" id="GO:0050518">
    <property type="term" value="F:2-C-methyl-D-erythritol 4-phosphate cytidylyltransferase activity"/>
    <property type="evidence" value="ECO:0000318"/>
    <property type="project" value="GO_Central"/>
</dbReference>
<dbReference type="GO" id="GO:0019288">
    <property type="term" value="P:isopentenyl diphosphate biosynthetic process, methylerythritol 4-phosphate pathway"/>
    <property type="evidence" value="ECO:0007669"/>
    <property type="project" value="UniProtKB-UniRule"/>
</dbReference>
<dbReference type="CDD" id="cd02516">
    <property type="entry name" value="CDP-ME_synthetase"/>
    <property type="match status" value="1"/>
</dbReference>
<dbReference type="FunFam" id="3.90.550.10:FF:000003">
    <property type="entry name" value="2-C-methyl-D-erythritol 4-phosphate cytidylyltransferase"/>
    <property type="match status" value="1"/>
</dbReference>
<dbReference type="Gene3D" id="3.90.550.10">
    <property type="entry name" value="Spore Coat Polysaccharide Biosynthesis Protein SpsA, Chain A"/>
    <property type="match status" value="1"/>
</dbReference>
<dbReference type="HAMAP" id="MF_00108">
    <property type="entry name" value="IspD"/>
    <property type="match status" value="1"/>
</dbReference>
<dbReference type="InterPro" id="IPR001228">
    <property type="entry name" value="IspD"/>
</dbReference>
<dbReference type="InterPro" id="IPR034683">
    <property type="entry name" value="IspD/TarI"/>
</dbReference>
<dbReference type="InterPro" id="IPR050088">
    <property type="entry name" value="IspD/TarI_cytidylyltransf_bact"/>
</dbReference>
<dbReference type="InterPro" id="IPR018294">
    <property type="entry name" value="ISPD_synthase_CS"/>
</dbReference>
<dbReference type="InterPro" id="IPR029044">
    <property type="entry name" value="Nucleotide-diphossugar_trans"/>
</dbReference>
<dbReference type="NCBIfam" id="TIGR00453">
    <property type="entry name" value="ispD"/>
    <property type="match status" value="1"/>
</dbReference>
<dbReference type="PANTHER" id="PTHR32125">
    <property type="entry name" value="2-C-METHYL-D-ERYTHRITOL 4-PHOSPHATE CYTIDYLYLTRANSFERASE, CHLOROPLASTIC"/>
    <property type="match status" value="1"/>
</dbReference>
<dbReference type="PANTHER" id="PTHR32125:SF4">
    <property type="entry name" value="2-C-METHYL-D-ERYTHRITOL 4-PHOSPHATE CYTIDYLYLTRANSFERASE, CHLOROPLASTIC"/>
    <property type="match status" value="1"/>
</dbReference>
<dbReference type="Pfam" id="PF01128">
    <property type="entry name" value="IspD"/>
    <property type="match status" value="1"/>
</dbReference>
<dbReference type="SUPFAM" id="SSF53448">
    <property type="entry name" value="Nucleotide-diphospho-sugar transferases"/>
    <property type="match status" value="1"/>
</dbReference>
<dbReference type="PROSITE" id="PS01295">
    <property type="entry name" value="ISPD"/>
    <property type="match status" value="1"/>
</dbReference>
<gene>
    <name evidence="1" type="primary">ispD</name>
    <name type="ordered locus">YPO3361</name>
    <name type="ordered locus">y0828</name>
    <name type="ordered locus">YP_0326</name>
</gene>
<keyword id="KW-0414">Isoprene biosynthesis</keyword>
<keyword id="KW-0548">Nucleotidyltransferase</keyword>
<keyword id="KW-1185">Reference proteome</keyword>
<keyword id="KW-0808">Transferase</keyword>
<accession>Q8ZBP6</accession>
<accession>Q0WBT4</accession>
<name>ISPD_YERPE</name>
<proteinExistence type="inferred from homology"/>